<evidence type="ECO:0000255" key="1">
    <source>
        <dbReference type="HAMAP-Rule" id="MF_00193"/>
    </source>
</evidence>
<reference key="1">
    <citation type="journal article" date="2008" name="DNA Res.">
        <title>Complete genome sequence and comparative analysis of the wild-type commensal Escherichia coli strain SE11 isolated from a healthy adult.</title>
        <authorList>
            <person name="Oshima K."/>
            <person name="Toh H."/>
            <person name="Ogura Y."/>
            <person name="Sasamoto H."/>
            <person name="Morita H."/>
            <person name="Park S.-H."/>
            <person name="Ooka T."/>
            <person name="Iyoda S."/>
            <person name="Taylor T.D."/>
            <person name="Hayashi T."/>
            <person name="Itoh K."/>
            <person name="Hattori M."/>
        </authorList>
    </citation>
    <scope>NUCLEOTIDE SEQUENCE [LARGE SCALE GENOMIC DNA]</scope>
    <source>
        <strain>SE11</strain>
    </source>
</reference>
<sequence length="275" mass="30638">MTLQQQIIKALGAKPQINAEEEIRRSIDFLKSYLQTYPFIKSLVLGISGGQDSTLAGKLCQMAINELRLETGNESLQFIAVRLPYGVQADEQDCQDAIAFIQPDRVLTVNIKGAVLASEQALREAGIELSDFVRGNEKARERMKAQYSIAGMTSGVVVGTDHAAEAITGFFTKYGDGGTDINPLYRLNKRQGKQLLAALGCPEHLYKKAPTADLEDDRPSLPDEVALGVTYDNIDDYLEGKNVPEQVARTIENWYLKTEHKRRPPITVFDDFWKK</sequence>
<proteinExistence type="inferred from homology"/>
<accession>B6IBG0</accession>
<dbReference type="EC" id="6.3.1.5" evidence="1"/>
<dbReference type="EMBL" id="AP009240">
    <property type="protein sequence ID" value="BAG77434.1"/>
    <property type="molecule type" value="Genomic_DNA"/>
</dbReference>
<dbReference type="RefSeq" id="WP_000175009.1">
    <property type="nucleotide sequence ID" value="NC_011415.1"/>
</dbReference>
<dbReference type="SMR" id="B6IBG0"/>
<dbReference type="GeneID" id="75203046"/>
<dbReference type="KEGG" id="ecy:ECSE_1910"/>
<dbReference type="HOGENOM" id="CLU_059327_3_0_6"/>
<dbReference type="UniPathway" id="UPA00253">
    <property type="reaction ID" value="UER00333"/>
</dbReference>
<dbReference type="Proteomes" id="UP000008199">
    <property type="component" value="Chromosome"/>
</dbReference>
<dbReference type="GO" id="GO:0005737">
    <property type="term" value="C:cytoplasm"/>
    <property type="evidence" value="ECO:0007669"/>
    <property type="project" value="InterPro"/>
</dbReference>
<dbReference type="GO" id="GO:0005524">
    <property type="term" value="F:ATP binding"/>
    <property type="evidence" value="ECO:0007669"/>
    <property type="project" value="UniProtKB-UniRule"/>
</dbReference>
<dbReference type="GO" id="GO:0004359">
    <property type="term" value="F:glutaminase activity"/>
    <property type="evidence" value="ECO:0007669"/>
    <property type="project" value="InterPro"/>
</dbReference>
<dbReference type="GO" id="GO:0046872">
    <property type="term" value="F:metal ion binding"/>
    <property type="evidence" value="ECO:0007669"/>
    <property type="project" value="UniProtKB-KW"/>
</dbReference>
<dbReference type="GO" id="GO:0003952">
    <property type="term" value="F:NAD+ synthase (glutamine-hydrolyzing) activity"/>
    <property type="evidence" value="ECO:0007669"/>
    <property type="project" value="InterPro"/>
</dbReference>
<dbReference type="GO" id="GO:0008795">
    <property type="term" value="F:NAD+ synthase activity"/>
    <property type="evidence" value="ECO:0007669"/>
    <property type="project" value="UniProtKB-UniRule"/>
</dbReference>
<dbReference type="GO" id="GO:0009435">
    <property type="term" value="P:NAD biosynthetic process"/>
    <property type="evidence" value="ECO:0007669"/>
    <property type="project" value="UniProtKB-UniRule"/>
</dbReference>
<dbReference type="CDD" id="cd00553">
    <property type="entry name" value="NAD_synthase"/>
    <property type="match status" value="1"/>
</dbReference>
<dbReference type="FunFam" id="3.40.50.620:FF:000015">
    <property type="entry name" value="NH(3)-dependent NAD(+) synthetase"/>
    <property type="match status" value="1"/>
</dbReference>
<dbReference type="Gene3D" id="3.40.50.620">
    <property type="entry name" value="HUPs"/>
    <property type="match status" value="1"/>
</dbReference>
<dbReference type="HAMAP" id="MF_00193">
    <property type="entry name" value="NadE_ammonia_dep"/>
    <property type="match status" value="1"/>
</dbReference>
<dbReference type="InterPro" id="IPR022310">
    <property type="entry name" value="NAD/GMP_synthase"/>
</dbReference>
<dbReference type="InterPro" id="IPR003694">
    <property type="entry name" value="NAD_synthase"/>
</dbReference>
<dbReference type="InterPro" id="IPR022926">
    <property type="entry name" value="NH(3)-dep_NAD(+)_synth"/>
</dbReference>
<dbReference type="InterPro" id="IPR014729">
    <property type="entry name" value="Rossmann-like_a/b/a_fold"/>
</dbReference>
<dbReference type="NCBIfam" id="TIGR00552">
    <property type="entry name" value="nadE"/>
    <property type="match status" value="1"/>
</dbReference>
<dbReference type="NCBIfam" id="NF001979">
    <property type="entry name" value="PRK00768.1"/>
    <property type="match status" value="1"/>
</dbReference>
<dbReference type="PANTHER" id="PTHR23090">
    <property type="entry name" value="NH 3 /GLUTAMINE-DEPENDENT NAD + SYNTHETASE"/>
    <property type="match status" value="1"/>
</dbReference>
<dbReference type="PANTHER" id="PTHR23090:SF7">
    <property type="entry name" value="NH(3)-DEPENDENT NAD(+) SYNTHETASE"/>
    <property type="match status" value="1"/>
</dbReference>
<dbReference type="Pfam" id="PF02540">
    <property type="entry name" value="NAD_synthase"/>
    <property type="match status" value="1"/>
</dbReference>
<dbReference type="SUPFAM" id="SSF52402">
    <property type="entry name" value="Adenine nucleotide alpha hydrolases-like"/>
    <property type="match status" value="1"/>
</dbReference>
<protein>
    <recommendedName>
        <fullName evidence="1">NH(3)-dependent NAD(+) synthetase</fullName>
        <ecNumber evidence="1">6.3.1.5</ecNumber>
    </recommendedName>
</protein>
<gene>
    <name evidence="1" type="primary">nadE</name>
    <name type="ordered locus">ECSE_1910</name>
</gene>
<organism>
    <name type="scientific">Escherichia coli (strain SE11)</name>
    <dbReference type="NCBI Taxonomy" id="409438"/>
    <lineage>
        <taxon>Bacteria</taxon>
        <taxon>Pseudomonadati</taxon>
        <taxon>Pseudomonadota</taxon>
        <taxon>Gammaproteobacteria</taxon>
        <taxon>Enterobacterales</taxon>
        <taxon>Enterobacteriaceae</taxon>
        <taxon>Escherichia</taxon>
    </lineage>
</organism>
<name>NADE_ECOSE</name>
<feature type="chain" id="PRO_1000099020" description="NH(3)-dependent NAD(+) synthetase">
    <location>
        <begin position="1"/>
        <end position="275"/>
    </location>
</feature>
<feature type="binding site" evidence="1">
    <location>
        <begin position="46"/>
        <end position="53"/>
    </location>
    <ligand>
        <name>ATP</name>
        <dbReference type="ChEBI" id="CHEBI:30616"/>
    </ligand>
</feature>
<feature type="binding site" evidence="1">
    <location>
        <position position="52"/>
    </location>
    <ligand>
        <name>Mg(2+)</name>
        <dbReference type="ChEBI" id="CHEBI:18420"/>
    </ligand>
</feature>
<feature type="binding site" evidence="1">
    <location>
        <position position="140"/>
    </location>
    <ligand>
        <name>deamido-NAD(+)</name>
        <dbReference type="ChEBI" id="CHEBI:58437"/>
    </ligand>
</feature>
<feature type="binding site" evidence="1">
    <location>
        <position position="160"/>
    </location>
    <ligand>
        <name>ATP</name>
        <dbReference type="ChEBI" id="CHEBI:30616"/>
    </ligand>
</feature>
<feature type="binding site" evidence="1">
    <location>
        <position position="165"/>
    </location>
    <ligand>
        <name>Mg(2+)</name>
        <dbReference type="ChEBI" id="CHEBI:18420"/>
    </ligand>
</feature>
<feature type="binding site" evidence="1">
    <location>
        <position position="173"/>
    </location>
    <ligand>
        <name>deamido-NAD(+)</name>
        <dbReference type="ChEBI" id="CHEBI:58437"/>
    </ligand>
</feature>
<feature type="binding site" evidence="1">
    <location>
        <position position="180"/>
    </location>
    <ligand>
        <name>deamido-NAD(+)</name>
        <dbReference type="ChEBI" id="CHEBI:58437"/>
    </ligand>
</feature>
<feature type="binding site" evidence="1">
    <location>
        <position position="189"/>
    </location>
    <ligand>
        <name>ATP</name>
        <dbReference type="ChEBI" id="CHEBI:30616"/>
    </ligand>
</feature>
<feature type="binding site" evidence="1">
    <location>
        <position position="211"/>
    </location>
    <ligand>
        <name>ATP</name>
        <dbReference type="ChEBI" id="CHEBI:30616"/>
    </ligand>
</feature>
<feature type="binding site" evidence="1">
    <location>
        <begin position="260"/>
        <end position="261"/>
    </location>
    <ligand>
        <name>deamido-NAD(+)</name>
        <dbReference type="ChEBI" id="CHEBI:58437"/>
    </ligand>
</feature>
<comment type="function">
    <text evidence="1">Catalyzes the ATP-dependent amidation of deamido-NAD to form NAD. Uses ammonia as a nitrogen source.</text>
</comment>
<comment type="catalytic activity">
    <reaction evidence="1">
        <text>deamido-NAD(+) + NH4(+) + ATP = AMP + diphosphate + NAD(+) + H(+)</text>
        <dbReference type="Rhea" id="RHEA:21188"/>
        <dbReference type="ChEBI" id="CHEBI:15378"/>
        <dbReference type="ChEBI" id="CHEBI:28938"/>
        <dbReference type="ChEBI" id="CHEBI:30616"/>
        <dbReference type="ChEBI" id="CHEBI:33019"/>
        <dbReference type="ChEBI" id="CHEBI:57540"/>
        <dbReference type="ChEBI" id="CHEBI:58437"/>
        <dbReference type="ChEBI" id="CHEBI:456215"/>
        <dbReference type="EC" id="6.3.1.5"/>
    </reaction>
</comment>
<comment type="pathway">
    <text evidence="1">Cofactor biosynthesis; NAD(+) biosynthesis; NAD(+) from deamido-NAD(+) (ammonia route): step 1/1.</text>
</comment>
<comment type="subunit">
    <text evidence="1">Homodimer.</text>
</comment>
<comment type="similarity">
    <text evidence="1">Belongs to the NAD synthetase family.</text>
</comment>
<keyword id="KW-0067">ATP-binding</keyword>
<keyword id="KW-0436">Ligase</keyword>
<keyword id="KW-0460">Magnesium</keyword>
<keyword id="KW-0479">Metal-binding</keyword>
<keyword id="KW-0520">NAD</keyword>
<keyword id="KW-0547">Nucleotide-binding</keyword>